<organism>
    <name type="scientific">Homo sapiens</name>
    <name type="common">Human</name>
    <dbReference type="NCBI Taxonomy" id="9606"/>
    <lineage>
        <taxon>Eukaryota</taxon>
        <taxon>Metazoa</taxon>
        <taxon>Chordata</taxon>
        <taxon>Craniata</taxon>
        <taxon>Vertebrata</taxon>
        <taxon>Euteleostomi</taxon>
        <taxon>Mammalia</taxon>
        <taxon>Eutheria</taxon>
        <taxon>Euarchontoglires</taxon>
        <taxon>Primates</taxon>
        <taxon>Haplorrhini</taxon>
        <taxon>Catarrhini</taxon>
        <taxon>Hominidae</taxon>
        <taxon>Homo</taxon>
    </lineage>
</organism>
<comment type="function">
    <text evidence="2 6">Catalyzes the transfer of endogenously produced octanoic acid from octanoyl-acyl-carrier-protein (octanoyl-ACP) onto the lipoyl domains of lipoate-dependent enzymes such as the protein H of the glycine cleavage system (GCSH) (PubMed:28757203). Lipoyl-ACP can also act as a substrate although octanoyl-ACP is likely to be the physiological substrate (By similarity).</text>
</comment>
<comment type="catalytic activity">
    <reaction evidence="2">
        <text>octanoyl-[ACP] + L-lysyl-[protein] = N(6)-octanoyl-L-lysyl-[protein] + holo-[ACP] + H(+)</text>
        <dbReference type="Rhea" id="RHEA:17665"/>
        <dbReference type="Rhea" id="RHEA-COMP:9636"/>
        <dbReference type="Rhea" id="RHEA-COMP:9685"/>
        <dbReference type="Rhea" id="RHEA-COMP:9752"/>
        <dbReference type="Rhea" id="RHEA-COMP:9928"/>
        <dbReference type="ChEBI" id="CHEBI:15378"/>
        <dbReference type="ChEBI" id="CHEBI:29969"/>
        <dbReference type="ChEBI" id="CHEBI:64479"/>
        <dbReference type="ChEBI" id="CHEBI:78463"/>
        <dbReference type="ChEBI" id="CHEBI:78809"/>
        <dbReference type="EC" id="2.3.1.181"/>
    </reaction>
    <physiologicalReaction direction="left-to-right" evidence="2">
        <dbReference type="Rhea" id="RHEA:17666"/>
    </physiologicalReaction>
</comment>
<comment type="pathway">
    <text>Protein modification; protein lipoylation via endogenous pathway; protein N(6)-(lipoyl)lysine from octanoyl-[acyl-carrier-protein]: step 1/2.</text>
</comment>
<comment type="subcellular location">
    <subcellularLocation>
        <location evidence="5 6">Mitochondrion</location>
    </subcellularLocation>
</comment>
<comment type="disease" evidence="6">
    <disease id="DI-05082">
        <name>Encephalopathy, neonatal severe, with lactic acidosis and brain abnormalities</name>
        <acronym>NELABA</acronym>
        <description>An autosomal recessive disorder characterized by severe encephalopathy with neonatal onset, metabolic features including lactic acidosis, little or no psychomotor development, and brain abnormalities including cerebral atrophy, cysts, and white matter abnormalities.</description>
        <dbReference type="MIM" id="617668"/>
    </disease>
    <text>The disease is caused by variants affecting the gene represented in this entry.</text>
</comment>
<comment type="miscellaneous">
    <text evidence="1">In the reaction, the free carboxyl group of octanoic acid is attached via an amide linkage to the epsilon-amino group of a specific lysine residue of lipoyl domains of lipoate-dependent enzymes.</text>
</comment>
<comment type="similarity">
    <text evidence="7">Belongs to the LipB family.</text>
</comment>
<dbReference type="EC" id="2.3.1.181" evidence="2"/>
<dbReference type="EMBL" id="AP001372">
    <property type="status" value="NOT_ANNOTATED_CDS"/>
    <property type="molecule type" value="Genomic_DNA"/>
</dbReference>
<dbReference type="CCDS" id="CCDS44679.1"/>
<dbReference type="RefSeq" id="NP_001138341.1">
    <property type="nucleotide sequence ID" value="NM_001144869.3"/>
</dbReference>
<dbReference type="SMR" id="A6NK58"/>
<dbReference type="BioGRID" id="132443">
    <property type="interactions" value="6"/>
</dbReference>
<dbReference type="FunCoup" id="A6NK58">
    <property type="interactions" value="999"/>
</dbReference>
<dbReference type="IntAct" id="A6NK58">
    <property type="interactions" value="1"/>
</dbReference>
<dbReference type="STRING" id="9606.ENSP00000309463"/>
<dbReference type="PhosphoSitePlus" id="A6NK58"/>
<dbReference type="SwissPalm" id="A6NK58"/>
<dbReference type="BioMuta" id="LIPT2"/>
<dbReference type="jPOST" id="A6NK58"/>
<dbReference type="MassIVE" id="A6NK58"/>
<dbReference type="PaxDb" id="9606-ENSP00000309463"/>
<dbReference type="PeptideAtlas" id="A6NK58"/>
<dbReference type="ProteomicsDB" id="1379"/>
<dbReference type="Pumba" id="A6NK58"/>
<dbReference type="Antibodypedia" id="48064">
    <property type="antibodies" value="81 antibodies from 16 providers"/>
</dbReference>
<dbReference type="DNASU" id="387787"/>
<dbReference type="Ensembl" id="ENST00000310109.5">
    <property type="protein sequence ID" value="ENSP00000309463.4"/>
    <property type="gene ID" value="ENSG00000175536.7"/>
</dbReference>
<dbReference type="GeneID" id="387787"/>
<dbReference type="KEGG" id="hsa:387787"/>
<dbReference type="MANE-Select" id="ENST00000310109.5">
    <property type="protein sequence ID" value="ENSP00000309463.4"/>
    <property type="RefSeq nucleotide sequence ID" value="NM_001144869.3"/>
    <property type="RefSeq protein sequence ID" value="NP_001138341.1"/>
</dbReference>
<dbReference type="UCSC" id="uc010rrk.3">
    <property type="organism name" value="human"/>
</dbReference>
<dbReference type="AGR" id="HGNC:37216"/>
<dbReference type="CTD" id="387787"/>
<dbReference type="DisGeNET" id="387787"/>
<dbReference type="GeneCards" id="LIPT2"/>
<dbReference type="HGNC" id="HGNC:37216">
    <property type="gene designation" value="LIPT2"/>
</dbReference>
<dbReference type="HPA" id="ENSG00000175536">
    <property type="expression patterns" value="Tissue enhanced (testis)"/>
</dbReference>
<dbReference type="MalaCards" id="LIPT2"/>
<dbReference type="MIM" id="617659">
    <property type="type" value="gene"/>
</dbReference>
<dbReference type="MIM" id="617668">
    <property type="type" value="phenotype"/>
</dbReference>
<dbReference type="neXtProt" id="NX_A6NK58"/>
<dbReference type="OpenTargets" id="ENSG00000175536"/>
<dbReference type="PharmGKB" id="PA165543447"/>
<dbReference type="VEuPathDB" id="HostDB:ENSG00000175536"/>
<dbReference type="eggNOG" id="KOG0325">
    <property type="taxonomic scope" value="Eukaryota"/>
</dbReference>
<dbReference type="GeneTree" id="ENSGT00390000006450"/>
<dbReference type="HOGENOM" id="CLU_035168_1_2_1"/>
<dbReference type="InParanoid" id="A6NK58"/>
<dbReference type="OMA" id="GEVTYHC"/>
<dbReference type="OrthoDB" id="19908at2759"/>
<dbReference type="PAN-GO" id="A6NK58">
    <property type="GO annotations" value="2 GO annotations based on evolutionary models"/>
</dbReference>
<dbReference type="PhylomeDB" id="A6NK58"/>
<dbReference type="TreeFam" id="TF314262"/>
<dbReference type="BioCyc" id="MetaCyc:G66-33937-MONOMER"/>
<dbReference type="BRENDA" id="2.3.1.181">
    <property type="organism ID" value="2681"/>
</dbReference>
<dbReference type="PathwayCommons" id="A6NK58"/>
<dbReference type="Reactome" id="R-HSA-9857492">
    <property type="pathway name" value="Protein lipoylation"/>
</dbReference>
<dbReference type="SignaLink" id="A6NK58"/>
<dbReference type="UniPathway" id="UPA00538">
    <property type="reaction ID" value="UER00592"/>
</dbReference>
<dbReference type="BioGRID-ORCS" id="387787">
    <property type="hits" value="81 hits in 1159 CRISPR screens"/>
</dbReference>
<dbReference type="GenomeRNAi" id="387787"/>
<dbReference type="Pharos" id="A6NK58">
    <property type="development level" value="Tbio"/>
</dbReference>
<dbReference type="PRO" id="PR:A6NK58"/>
<dbReference type="Proteomes" id="UP000005640">
    <property type="component" value="Chromosome 11"/>
</dbReference>
<dbReference type="RNAct" id="A6NK58">
    <property type="molecule type" value="protein"/>
</dbReference>
<dbReference type="Bgee" id="ENSG00000175536">
    <property type="expression patterns" value="Expressed in male germ line stem cell (sensu Vertebrata) in testis and 103 other cell types or tissues"/>
</dbReference>
<dbReference type="ExpressionAtlas" id="A6NK58">
    <property type="expression patterns" value="baseline and differential"/>
</dbReference>
<dbReference type="GO" id="GO:0005759">
    <property type="term" value="C:mitochondrial matrix"/>
    <property type="evidence" value="ECO:0000304"/>
    <property type="project" value="Reactome"/>
</dbReference>
<dbReference type="GO" id="GO:0005739">
    <property type="term" value="C:mitochondrion"/>
    <property type="evidence" value="ECO:0000314"/>
    <property type="project" value="UniProtKB"/>
</dbReference>
<dbReference type="GO" id="GO:0016874">
    <property type="term" value="F:ligase activity"/>
    <property type="evidence" value="ECO:0007669"/>
    <property type="project" value="UniProtKB-KW"/>
</dbReference>
<dbReference type="GO" id="GO:0033819">
    <property type="term" value="F:lipoyl(octanoyl) transferase activity"/>
    <property type="evidence" value="ECO:0000250"/>
    <property type="project" value="UniProtKB"/>
</dbReference>
<dbReference type="GO" id="GO:2000376">
    <property type="term" value="P:positive regulation of oxygen metabolic process"/>
    <property type="evidence" value="ECO:0000315"/>
    <property type="project" value="UniProtKB"/>
</dbReference>
<dbReference type="GO" id="GO:0009249">
    <property type="term" value="P:protein lipoylation"/>
    <property type="evidence" value="ECO:0000315"/>
    <property type="project" value="UniProtKB"/>
</dbReference>
<dbReference type="CDD" id="cd16444">
    <property type="entry name" value="LipB"/>
    <property type="match status" value="1"/>
</dbReference>
<dbReference type="FunFam" id="3.30.930.10:FF:000035">
    <property type="entry name" value="Putative lipoyltransferase 2, mitochondrial"/>
    <property type="match status" value="1"/>
</dbReference>
<dbReference type="Gene3D" id="3.30.930.10">
    <property type="entry name" value="Bira Bifunctional Protein, Domain 2"/>
    <property type="match status" value="1"/>
</dbReference>
<dbReference type="InterPro" id="IPR045864">
    <property type="entry name" value="aa-tRNA-synth_II/BPL/LPL"/>
</dbReference>
<dbReference type="InterPro" id="IPR004143">
    <property type="entry name" value="BPL_LPL_catalytic"/>
</dbReference>
<dbReference type="InterPro" id="IPR000544">
    <property type="entry name" value="Octanoyltransferase"/>
</dbReference>
<dbReference type="NCBIfam" id="TIGR00214">
    <property type="entry name" value="lipB"/>
    <property type="match status" value="1"/>
</dbReference>
<dbReference type="PANTHER" id="PTHR10993:SF7">
    <property type="entry name" value="LIPOYLTRANSFERASE 2, MITOCHONDRIAL-RELATED"/>
    <property type="match status" value="1"/>
</dbReference>
<dbReference type="PANTHER" id="PTHR10993">
    <property type="entry name" value="OCTANOYLTRANSFERASE"/>
    <property type="match status" value="1"/>
</dbReference>
<dbReference type="Pfam" id="PF21948">
    <property type="entry name" value="LplA-B_cat"/>
    <property type="match status" value="1"/>
</dbReference>
<dbReference type="PIRSF" id="PIRSF016262">
    <property type="entry name" value="LPLase"/>
    <property type="match status" value="1"/>
</dbReference>
<dbReference type="SUPFAM" id="SSF55681">
    <property type="entry name" value="Class II aaRS and biotin synthetases"/>
    <property type="match status" value="1"/>
</dbReference>
<dbReference type="PROSITE" id="PS51733">
    <property type="entry name" value="BPL_LPL_CATALYTIC"/>
    <property type="match status" value="1"/>
</dbReference>
<evidence type="ECO:0000250" key="1"/>
<evidence type="ECO:0000250" key="2">
    <source>
        <dbReference type="UniProtKB" id="Q9D009"/>
    </source>
</evidence>
<evidence type="ECO:0000255" key="3"/>
<evidence type="ECO:0000255" key="4">
    <source>
        <dbReference type="PROSITE-ProRule" id="PRU01067"/>
    </source>
</evidence>
<evidence type="ECO:0000269" key="5">
    <source>
    </source>
</evidence>
<evidence type="ECO:0000269" key="6">
    <source>
    </source>
</evidence>
<evidence type="ECO:0000305" key="7"/>
<evidence type="ECO:0000312" key="8">
    <source>
        <dbReference type="HGNC" id="HGNC:37216"/>
    </source>
</evidence>
<sequence>MRQPAVRLVRLGRVPYAELLGLQDRWLRRLQAEPGIEAPSGTEAGALLLCEPAGPVYTAGLRGGLTPEETARLRALGAEVRVTGRGGLATFHGPGQLLCHPVLDLRRLGLRLRMHVASLEACAVRLCELQGLQDARARPPPYTGVWLDDRKICAIGVRCGRHITSHGLALNCSTDLTWFEHIVPCGLVGTGVTSLSKELQRHVTVEEVMPPFLVAFKEIYKCTLISEDSPN</sequence>
<reference key="1">
    <citation type="journal article" date="2006" name="Nature">
        <title>Human chromosome 11 DNA sequence and analysis including novel gene identification.</title>
        <authorList>
            <person name="Taylor T.D."/>
            <person name="Noguchi H."/>
            <person name="Totoki Y."/>
            <person name="Toyoda A."/>
            <person name="Kuroki Y."/>
            <person name="Dewar K."/>
            <person name="Lloyd C."/>
            <person name="Itoh T."/>
            <person name="Takeda T."/>
            <person name="Kim D.-W."/>
            <person name="She X."/>
            <person name="Barlow K.F."/>
            <person name="Bloom T."/>
            <person name="Bruford E."/>
            <person name="Chang J.L."/>
            <person name="Cuomo C.A."/>
            <person name="Eichler E."/>
            <person name="FitzGerald M.G."/>
            <person name="Jaffe D.B."/>
            <person name="LaButti K."/>
            <person name="Nicol R."/>
            <person name="Park H.-S."/>
            <person name="Seaman C."/>
            <person name="Sougnez C."/>
            <person name="Yang X."/>
            <person name="Zimmer A.R."/>
            <person name="Zody M.C."/>
            <person name="Birren B.W."/>
            <person name="Nusbaum C."/>
            <person name="Fujiyama A."/>
            <person name="Hattori M."/>
            <person name="Rogers J."/>
            <person name="Lander E.S."/>
            <person name="Sakaki Y."/>
        </authorList>
    </citation>
    <scope>NUCLEOTIDE SEQUENCE [LARGE SCALE GENOMIC DNA]</scope>
</reference>
<reference key="2">
    <citation type="journal article" date="2017" name="Am. J. Hum. Genet.">
        <title>Biallelic mutations in LIPT2 cause a mitochondrial lipoylation defect associated with severe neonatal encephalopathy.</title>
        <authorList>
            <person name="Habarou F."/>
            <person name="Hamel Y."/>
            <person name="Haack T.B."/>
            <person name="Feichtinger R.G."/>
            <person name="Lebigot E."/>
            <person name="Marquardt I."/>
            <person name="Busiah K."/>
            <person name="Laroche C."/>
            <person name="Madrange M."/>
            <person name="Grisel C."/>
            <person name="Pontoizeau C."/>
            <person name="Eisermann M."/>
            <person name="Boutron A."/>
            <person name="Chretien D."/>
            <person name="Chadefaux-Vekemans B."/>
            <person name="Barouki R."/>
            <person name="Bole-Feysot C."/>
            <person name="Nitschke P."/>
            <person name="Goudin N."/>
            <person name="Boddaert N."/>
            <person name="Nemazanyy I."/>
            <person name="Delahodde A."/>
            <person name="Koelker S."/>
            <person name="Rodenburg R.J."/>
            <person name="Korenke G.C."/>
            <person name="Meitinger T."/>
            <person name="Strom T.M."/>
            <person name="Prokisch H."/>
            <person name="Rotig A."/>
            <person name="Ottolenghi C."/>
            <person name="Mayr J.A."/>
            <person name="de Lonlay P."/>
        </authorList>
    </citation>
    <scope>FUNCTION</scope>
    <scope>SUBCELLULAR LOCATION</scope>
    <scope>INVOLVEMENT IN NELABA</scope>
    <scope>VARIANTS NELABA PRO-30; ARG-105 AND ARG-126</scope>
</reference>
<reference key="3">
    <citation type="journal article" date="2017" name="PLoS ONE">
        <title>Mis-targeting of the mitochondrial protein LIPT2 leads to apoptotic cell death.</title>
        <authorList>
            <person name="Bernardinelli E."/>
            <person name="Costa R."/>
            <person name="Scantamburlo G."/>
            <person name="To J."/>
            <person name="Morabito R."/>
            <person name="Nofziger C."/>
            <person name="Doerrier C."/>
            <person name="Krumschnabel G."/>
            <person name="Paulmichl M."/>
            <person name="Dossena S."/>
        </authorList>
    </citation>
    <scope>SUBCELLULAR LOCATION</scope>
    <scope>MUTAGENESIS OF 1-MET--GLN-31</scope>
</reference>
<protein>
    <recommendedName>
        <fullName evidence="7">Octanoyl-[acyl-carrier-protein]:protein N-octanoyltransferase LIPT2, mitochondrial</fullName>
    </recommendedName>
    <alternativeName>
        <fullName>Lipoate-protein ligase B</fullName>
    </alternativeName>
    <alternativeName>
        <fullName>Lipoyl/octanoyl transferase</fullName>
    </alternativeName>
    <alternativeName>
        <fullName>Lipoyltransferase 2</fullName>
        <ecNumber evidence="2">2.3.1.181</ecNumber>
    </alternativeName>
    <alternativeName>
        <fullName>Octanoyl-[acyl-carrier-protein]-protein N-octanoyltransferase</fullName>
    </alternativeName>
</protein>
<proteinExistence type="evidence at protein level"/>
<gene>
    <name evidence="8" type="primary">LIPT2</name>
</gene>
<name>LIPT2_HUMAN</name>
<feature type="transit peptide" description="Mitochondrion" evidence="3">
    <location>
        <begin position="1"/>
        <end position="31"/>
    </location>
</feature>
<feature type="chain" id="PRO_0000332305" description="Octanoyl-[acyl-carrier-protein]:protein N-octanoyltransferase LIPT2, mitochondrial">
    <location>
        <begin position="32"/>
        <end position="231"/>
    </location>
</feature>
<feature type="domain" description="BPL/LPL catalytic" evidence="4">
    <location>
        <begin position="41"/>
        <end position="224"/>
    </location>
</feature>
<feature type="active site" description="Acyl-thioester intermediate" evidence="1">
    <location>
        <position position="185"/>
    </location>
</feature>
<feature type="binding site" evidence="1">
    <location>
        <begin position="85"/>
        <end position="92"/>
    </location>
    <ligand>
        <name>substrate</name>
    </ligand>
</feature>
<feature type="binding site" evidence="1">
    <location>
        <begin position="154"/>
        <end position="156"/>
    </location>
    <ligand>
        <name>substrate</name>
    </ligand>
</feature>
<feature type="binding site" evidence="1">
    <location>
        <begin position="167"/>
        <end position="169"/>
    </location>
    <ligand>
        <name>substrate</name>
    </ligand>
</feature>
<feature type="site" description="Lowers pKa of active site Cys" evidence="1">
    <location>
        <position position="151"/>
    </location>
</feature>
<feature type="sequence variant" id="VAR_080037" description="In NELABA; dbSNP:rs539962457." evidence="6">
    <original>L</original>
    <variation>P</variation>
    <location>
        <position position="30"/>
    </location>
</feature>
<feature type="sequence variant" id="VAR_080038" description="In NELABA; dbSNP:rs1190703859." evidence="6">
    <original>L</original>
    <variation>R</variation>
    <location>
        <position position="105"/>
    </location>
</feature>
<feature type="sequence variant" id="VAR_080039" description="In NELABA; dbSNP:rs753904927." evidence="6">
    <original>L</original>
    <variation>R</variation>
    <location>
        <position position="126"/>
    </location>
</feature>
<feature type="mutagenesis site" description="Mislocalization to the cytosol; induces apoptotic cell death." evidence="5">
    <location>
        <begin position="1"/>
        <end position="31"/>
    </location>
</feature>
<keyword id="KW-0012">Acyltransferase</keyword>
<keyword id="KW-0225">Disease variant</keyword>
<keyword id="KW-0436">Ligase</keyword>
<keyword id="KW-0496">Mitochondrion</keyword>
<keyword id="KW-1267">Proteomics identification</keyword>
<keyword id="KW-1185">Reference proteome</keyword>
<keyword id="KW-0808">Transferase</keyword>
<keyword id="KW-0809">Transit peptide</keyword>
<accession>A6NK58</accession>